<sequence length="117" mass="12774">MNKRGALLSLLLLSASVSAFAASTESKSVKFPQCEGLDAAGIAASVKRDYQQNRIVRWADDQKKVGQADPVAWVNVQDVVGQNDKWTVPLTVRGKSADIHYQVIVDCKAGKAEYKPR</sequence>
<evidence type="ECO:0000255" key="1">
    <source>
        <dbReference type="HAMAP-Rule" id="MF_01435"/>
    </source>
</evidence>
<evidence type="ECO:0000255" key="2">
    <source>
        <dbReference type="PROSITE-ProRule" id="PRU01323"/>
    </source>
</evidence>
<name>YEBF_SALEP</name>
<comment type="subcellular location">
    <subcellularLocation>
        <location evidence="1">Secreted</location>
    </subcellularLocation>
</comment>
<comment type="similarity">
    <text evidence="1">Belongs to the YebF family.</text>
</comment>
<feature type="signal peptide" evidence="1">
    <location>
        <begin position="1"/>
        <end position="21"/>
    </location>
</feature>
<feature type="chain" id="PRO_5000397690" description="Protein YebF">
    <location>
        <begin position="22"/>
        <end position="117"/>
    </location>
</feature>
<feature type="domain" description="YebF/Cmi" evidence="2">
    <location>
        <begin position="30"/>
        <end position="117"/>
    </location>
</feature>
<feature type="disulfide bond" evidence="2">
    <location>
        <begin position="34"/>
        <end position="107"/>
    </location>
</feature>
<dbReference type="EMBL" id="AM933172">
    <property type="protein sequence ID" value="CAR32705.1"/>
    <property type="molecule type" value="Genomic_DNA"/>
</dbReference>
<dbReference type="RefSeq" id="WP_001042123.1">
    <property type="nucleotide sequence ID" value="NC_011294.1"/>
</dbReference>
<dbReference type="SMR" id="B5R1X2"/>
<dbReference type="KEGG" id="set:SEN1122"/>
<dbReference type="HOGENOM" id="CLU_161319_1_0_6"/>
<dbReference type="Proteomes" id="UP000000613">
    <property type="component" value="Chromosome"/>
</dbReference>
<dbReference type="GO" id="GO:0005576">
    <property type="term" value="C:extracellular region"/>
    <property type="evidence" value="ECO:0007669"/>
    <property type="project" value="UniProtKB-SubCell"/>
</dbReference>
<dbReference type="Gene3D" id="3.10.450.300">
    <property type="entry name" value="YebF/Colicin-M immunity protein"/>
    <property type="match status" value="1"/>
</dbReference>
<dbReference type="HAMAP" id="MF_01435">
    <property type="entry name" value="YebF"/>
    <property type="match status" value="1"/>
</dbReference>
<dbReference type="InterPro" id="IPR020236">
    <property type="entry name" value="Uncharacterised_YebF"/>
</dbReference>
<dbReference type="InterPro" id="IPR038703">
    <property type="entry name" value="YebF/Cmi_sf"/>
</dbReference>
<dbReference type="InterPro" id="IPR025603">
    <property type="entry name" value="YebF/ColM_immunity"/>
</dbReference>
<dbReference type="NCBIfam" id="NF010224">
    <property type="entry name" value="PRK13680.1"/>
    <property type="match status" value="1"/>
</dbReference>
<dbReference type="NCBIfam" id="NF041240">
    <property type="entry name" value="YebF_not_Cmi"/>
    <property type="match status" value="1"/>
</dbReference>
<dbReference type="Pfam" id="PF13995">
    <property type="entry name" value="YebF"/>
    <property type="match status" value="1"/>
</dbReference>
<dbReference type="PROSITE" id="PS51979">
    <property type="entry name" value="YEBF_CMI"/>
    <property type="match status" value="1"/>
</dbReference>
<protein>
    <recommendedName>
        <fullName evidence="1">Protein YebF</fullName>
    </recommendedName>
</protein>
<proteinExistence type="inferred from homology"/>
<accession>B5R1X2</accession>
<gene>
    <name evidence="1" type="primary">yebF</name>
    <name type="ordered locus">SEN1122</name>
</gene>
<reference key="1">
    <citation type="journal article" date="2008" name="Genome Res.">
        <title>Comparative genome analysis of Salmonella enteritidis PT4 and Salmonella gallinarum 287/91 provides insights into evolutionary and host adaptation pathways.</title>
        <authorList>
            <person name="Thomson N.R."/>
            <person name="Clayton D.J."/>
            <person name="Windhorst D."/>
            <person name="Vernikos G."/>
            <person name="Davidson S."/>
            <person name="Churcher C."/>
            <person name="Quail M.A."/>
            <person name="Stevens M."/>
            <person name="Jones M.A."/>
            <person name="Watson M."/>
            <person name="Barron A."/>
            <person name="Layton A."/>
            <person name="Pickard D."/>
            <person name="Kingsley R.A."/>
            <person name="Bignell A."/>
            <person name="Clark L."/>
            <person name="Harris B."/>
            <person name="Ormond D."/>
            <person name="Abdellah Z."/>
            <person name="Brooks K."/>
            <person name="Cherevach I."/>
            <person name="Chillingworth T."/>
            <person name="Woodward J."/>
            <person name="Norberczak H."/>
            <person name="Lord A."/>
            <person name="Arrowsmith C."/>
            <person name="Jagels K."/>
            <person name="Moule S."/>
            <person name="Mungall K."/>
            <person name="Saunders M."/>
            <person name="Whitehead S."/>
            <person name="Chabalgoity J.A."/>
            <person name="Maskell D."/>
            <person name="Humphreys T."/>
            <person name="Roberts M."/>
            <person name="Barrow P.A."/>
            <person name="Dougan G."/>
            <person name="Parkhill J."/>
        </authorList>
    </citation>
    <scope>NUCLEOTIDE SEQUENCE [LARGE SCALE GENOMIC DNA]</scope>
    <source>
        <strain>P125109</strain>
    </source>
</reference>
<organism>
    <name type="scientific">Salmonella enteritidis PT4 (strain P125109)</name>
    <dbReference type="NCBI Taxonomy" id="550537"/>
    <lineage>
        <taxon>Bacteria</taxon>
        <taxon>Pseudomonadati</taxon>
        <taxon>Pseudomonadota</taxon>
        <taxon>Gammaproteobacteria</taxon>
        <taxon>Enterobacterales</taxon>
        <taxon>Enterobacteriaceae</taxon>
        <taxon>Salmonella</taxon>
    </lineage>
</organism>
<keyword id="KW-1015">Disulfide bond</keyword>
<keyword id="KW-0964">Secreted</keyword>
<keyword id="KW-0732">Signal</keyword>